<evidence type="ECO:0000255" key="1">
    <source>
        <dbReference type="HAMAP-Rule" id="MF_00403"/>
    </source>
</evidence>
<evidence type="ECO:0000305" key="2"/>
<sequence length="142" mass="16052">MGRGLFAARKLMENRKKFRWSDRRFVRRTLGLAAKADPLEGAPMARGIVLEKIGIEARQPNSAIRKAVRVQLIKNGRQITAFCPGDGAINFIDEHDEVIVEKIGGRMGRSMGDIPGVRYKVVKVNNTSLRELVRGRKEKRLR</sequence>
<gene>
    <name evidence="1" type="primary">rps12</name>
    <name type="ordered locus">AF_1892</name>
</gene>
<feature type="chain" id="PRO_0000146364" description="Small ribosomal subunit protein uS12">
    <location>
        <begin position="1"/>
        <end position="142"/>
    </location>
</feature>
<accession>O28387</accession>
<dbReference type="EMBL" id="AE000782">
    <property type="protein sequence ID" value="AAB89362.1"/>
    <property type="status" value="ALT_INIT"/>
    <property type="molecule type" value="Genomic_DNA"/>
</dbReference>
<dbReference type="PIR" id="C69486">
    <property type="entry name" value="C69486"/>
</dbReference>
<dbReference type="RefSeq" id="WP_048064744.1">
    <property type="nucleotide sequence ID" value="NC_000917.1"/>
</dbReference>
<dbReference type="SMR" id="O28387"/>
<dbReference type="STRING" id="224325.AF_1892"/>
<dbReference type="PaxDb" id="224325-AF_1892"/>
<dbReference type="EnsemblBacteria" id="AAB89362">
    <property type="protein sequence ID" value="AAB89362"/>
    <property type="gene ID" value="AF_1892"/>
</dbReference>
<dbReference type="KEGG" id="afu:AF_1892"/>
<dbReference type="eggNOG" id="arCOG04255">
    <property type="taxonomic scope" value="Archaea"/>
</dbReference>
<dbReference type="HOGENOM" id="CLU_115574_0_1_2"/>
<dbReference type="OrthoDB" id="45154at2157"/>
<dbReference type="PhylomeDB" id="O28387"/>
<dbReference type="Proteomes" id="UP000002199">
    <property type="component" value="Chromosome"/>
</dbReference>
<dbReference type="GO" id="GO:0015935">
    <property type="term" value="C:small ribosomal subunit"/>
    <property type="evidence" value="ECO:0007669"/>
    <property type="project" value="InterPro"/>
</dbReference>
<dbReference type="GO" id="GO:0019843">
    <property type="term" value="F:rRNA binding"/>
    <property type="evidence" value="ECO:0007669"/>
    <property type="project" value="UniProtKB-UniRule"/>
</dbReference>
<dbReference type="GO" id="GO:0003735">
    <property type="term" value="F:structural constituent of ribosome"/>
    <property type="evidence" value="ECO:0007669"/>
    <property type="project" value="InterPro"/>
</dbReference>
<dbReference type="GO" id="GO:0006412">
    <property type="term" value="P:translation"/>
    <property type="evidence" value="ECO:0007669"/>
    <property type="project" value="UniProtKB-UniRule"/>
</dbReference>
<dbReference type="CDD" id="cd03367">
    <property type="entry name" value="Ribosomal_S23"/>
    <property type="match status" value="1"/>
</dbReference>
<dbReference type="FunFam" id="2.40.50.140:FF:000007">
    <property type="entry name" value="40S ribosomal protein S23"/>
    <property type="match status" value="1"/>
</dbReference>
<dbReference type="Gene3D" id="2.40.50.140">
    <property type="entry name" value="Nucleic acid-binding proteins"/>
    <property type="match status" value="1"/>
</dbReference>
<dbReference type="HAMAP" id="MF_00403_A">
    <property type="entry name" value="Ribosomal_uS12_A"/>
    <property type="match status" value="1"/>
</dbReference>
<dbReference type="InterPro" id="IPR012340">
    <property type="entry name" value="NA-bd_OB-fold"/>
</dbReference>
<dbReference type="InterPro" id="IPR006032">
    <property type="entry name" value="Ribosomal_uS12"/>
</dbReference>
<dbReference type="InterPro" id="IPR022863">
    <property type="entry name" value="Ribosomal_uS12_arc"/>
</dbReference>
<dbReference type="InterPro" id="IPR005680">
    <property type="entry name" value="Ribosomal_uS12_euk/arc"/>
</dbReference>
<dbReference type="NCBIfam" id="NF003254">
    <property type="entry name" value="PRK04211.1"/>
    <property type="match status" value="1"/>
</dbReference>
<dbReference type="NCBIfam" id="TIGR00982">
    <property type="entry name" value="uS12_E_A"/>
    <property type="match status" value="1"/>
</dbReference>
<dbReference type="PANTHER" id="PTHR11652">
    <property type="entry name" value="30S RIBOSOMAL PROTEIN S12 FAMILY MEMBER"/>
    <property type="match status" value="1"/>
</dbReference>
<dbReference type="Pfam" id="PF00164">
    <property type="entry name" value="Ribosom_S12_S23"/>
    <property type="match status" value="1"/>
</dbReference>
<dbReference type="PIRSF" id="PIRSF002133">
    <property type="entry name" value="Ribosomal_S12/S23"/>
    <property type="match status" value="1"/>
</dbReference>
<dbReference type="SUPFAM" id="SSF50249">
    <property type="entry name" value="Nucleic acid-binding proteins"/>
    <property type="match status" value="1"/>
</dbReference>
<dbReference type="PROSITE" id="PS00055">
    <property type="entry name" value="RIBOSOMAL_S12"/>
    <property type="match status" value="1"/>
</dbReference>
<reference key="1">
    <citation type="journal article" date="1997" name="Nature">
        <title>The complete genome sequence of the hyperthermophilic, sulphate-reducing archaeon Archaeoglobus fulgidus.</title>
        <authorList>
            <person name="Klenk H.-P."/>
            <person name="Clayton R.A."/>
            <person name="Tomb J.-F."/>
            <person name="White O."/>
            <person name="Nelson K.E."/>
            <person name="Ketchum K.A."/>
            <person name="Dodson R.J."/>
            <person name="Gwinn M.L."/>
            <person name="Hickey E.K."/>
            <person name="Peterson J.D."/>
            <person name="Richardson D.L."/>
            <person name="Kerlavage A.R."/>
            <person name="Graham D.E."/>
            <person name="Kyrpides N.C."/>
            <person name="Fleischmann R.D."/>
            <person name="Quackenbush J."/>
            <person name="Lee N.H."/>
            <person name="Sutton G.G."/>
            <person name="Gill S.R."/>
            <person name="Kirkness E.F."/>
            <person name="Dougherty B.A."/>
            <person name="McKenney K."/>
            <person name="Adams M.D."/>
            <person name="Loftus B.J."/>
            <person name="Peterson S.N."/>
            <person name="Reich C.I."/>
            <person name="McNeil L.K."/>
            <person name="Badger J.H."/>
            <person name="Glodek A."/>
            <person name="Zhou L."/>
            <person name="Overbeek R."/>
            <person name="Gocayne J.D."/>
            <person name="Weidman J.F."/>
            <person name="McDonald L.A."/>
            <person name="Utterback T.R."/>
            <person name="Cotton M.D."/>
            <person name="Spriggs T."/>
            <person name="Artiach P."/>
            <person name="Kaine B.P."/>
            <person name="Sykes S.M."/>
            <person name="Sadow P.W."/>
            <person name="D'Andrea K.P."/>
            <person name="Bowman C."/>
            <person name="Fujii C."/>
            <person name="Garland S.A."/>
            <person name="Mason T.M."/>
            <person name="Olsen G.J."/>
            <person name="Fraser C.M."/>
            <person name="Smith H.O."/>
            <person name="Woese C.R."/>
            <person name="Venter J.C."/>
        </authorList>
    </citation>
    <scope>NUCLEOTIDE SEQUENCE [LARGE SCALE GENOMIC DNA]</scope>
    <source>
        <strain>ATCC 49558 / DSM 4304 / JCM 9628 / NBRC 100126 / VC-16</strain>
    </source>
</reference>
<proteinExistence type="inferred from homology"/>
<comment type="function">
    <text evidence="1">With S4 and S5 plays an important role in translational accuracy. Located at the interface of the 30S and 50S subunits.</text>
</comment>
<comment type="subunit">
    <text evidence="1">Part of the 30S ribosomal subunit.</text>
</comment>
<comment type="similarity">
    <text evidence="1">Belongs to the universal ribosomal protein uS12 family.</text>
</comment>
<comment type="sequence caution" evidence="2">
    <conflict type="erroneous initiation">
        <sequence resource="EMBL-CDS" id="AAB89362"/>
    </conflict>
    <text>Extended N-terminus.</text>
</comment>
<protein>
    <recommendedName>
        <fullName evidence="1">Small ribosomal subunit protein uS12</fullName>
    </recommendedName>
    <alternativeName>
        <fullName evidence="2">30S ribosomal protein S12</fullName>
    </alternativeName>
</protein>
<keyword id="KW-1185">Reference proteome</keyword>
<keyword id="KW-0687">Ribonucleoprotein</keyword>
<keyword id="KW-0689">Ribosomal protein</keyword>
<keyword id="KW-0694">RNA-binding</keyword>
<keyword id="KW-0699">rRNA-binding</keyword>
<organism>
    <name type="scientific">Archaeoglobus fulgidus (strain ATCC 49558 / DSM 4304 / JCM 9628 / NBRC 100126 / VC-16)</name>
    <dbReference type="NCBI Taxonomy" id="224325"/>
    <lineage>
        <taxon>Archaea</taxon>
        <taxon>Methanobacteriati</taxon>
        <taxon>Methanobacteriota</taxon>
        <taxon>Archaeoglobi</taxon>
        <taxon>Archaeoglobales</taxon>
        <taxon>Archaeoglobaceae</taxon>
        <taxon>Archaeoglobus</taxon>
    </lineage>
</organism>
<name>RS12_ARCFU</name>